<sequence>MARFTPLLMILLALVPLYYSLDCRKFSFAPACRGIMLKRSGGHPMIAEQQPMIDNAKAREVQMMELLIRNIEDEALIANSDCVSMSWLRDRLVNAKNEMPQ</sequence>
<reference key="1">
    <citation type="journal article" date="1998" name="Science">
        <title>Genome sequence of the nematode C. elegans: a platform for investigating biology.</title>
        <authorList>
            <consortium name="The C. elegans sequencing consortium"/>
        </authorList>
    </citation>
    <scope>NUCLEOTIDE SEQUENCE [LARGE SCALE GENOMIC DNA]</scope>
    <source>
        <strain>Bristol N2</strain>
    </source>
</reference>
<reference key="2">
    <citation type="journal article" date="2010" name="Science">
        <title>Olfactory plasticity is regulated by pheromonal signaling in Caenorhabditis elegans.</title>
        <authorList>
            <person name="Yamada K."/>
            <person name="Hirotsu T."/>
            <person name="Matsuki M."/>
            <person name="Butcher R.A."/>
            <person name="Tomioka M."/>
            <person name="Ishihara T."/>
            <person name="Clardy J."/>
            <person name="Kunitomo H."/>
            <person name="Iino Y."/>
        </authorList>
    </citation>
    <scope>FUNCTION</scope>
    <scope>DISRUPTION PHENOTYPE</scope>
    <scope>SUBCELLULAR LOCATION</scope>
    <scope>TISSUE SPECIFICITY</scope>
</reference>
<accession>Q11099</accession>
<comment type="function">
    <text evidence="2 3">Negatively regulates chemotaxis and olfactory plasticity which is the change from positive chemotaxis to dispersal after prolonged exposure to an odorant. May be down-regulated in response to pheromone exposure, resulting in promotion of olfactory plasticity.</text>
</comment>
<comment type="subcellular location">
    <subcellularLocation>
        <location evidence="3">Secreted</location>
    </subcellularLocation>
    <subcellularLocation>
        <location evidence="2">Perikaryon</location>
    </subcellularLocation>
    <text evidence="3">May be transported to neurites in an unc-104-dependent manner and secreted from there.</text>
</comment>
<comment type="tissue specificity">
    <text evidence="2">Expressed in coelomocytes, the ASK sensory neurons and interneurons AIB, AIM and PVQ.</text>
</comment>
<comment type="PTM">
    <text evidence="3">May be degraded by the nep-2 peptidase.</text>
</comment>
<comment type="disruption phenotype">
    <text evidence="2">Suppresses the olfactory plasticity defect in nep-2 mutants, which are defective in the plasticity of chemotaxis to benzaldehyde. Double mutants of snet-1 and daf-22 suppress the daf-22 mutant olfactory plasticity-defective phenotype to levels similar to wild-type.</text>
</comment>
<feature type="signal peptide" evidence="1">
    <location>
        <begin position="1"/>
        <end position="20"/>
    </location>
</feature>
<feature type="chain" id="PRO_0000014275" description="Protein snet-1">
    <location>
        <begin position="21"/>
        <end position="101"/>
    </location>
</feature>
<evidence type="ECO:0000255" key="1"/>
<evidence type="ECO:0000269" key="2">
    <source>
    </source>
</evidence>
<evidence type="ECO:0000303" key="3">
    <source>
    </source>
</evidence>
<evidence type="ECO:0000312" key="4">
    <source>
        <dbReference type="WormBase" id="C02F12.3"/>
    </source>
</evidence>
<name>SNET1_CAEEL</name>
<protein>
    <recommendedName>
        <fullName evidence="4">Protein snet-1</fullName>
    </recommendedName>
    <alternativeName>
        <fullName evidence="4">Suppressor of nep-2</fullName>
    </alternativeName>
</protein>
<keyword id="KW-0145">Chemotaxis</keyword>
<keyword id="KW-0589">Pheromone response</keyword>
<keyword id="KW-1185">Reference proteome</keyword>
<keyword id="KW-0964">Secreted</keyword>
<keyword id="KW-0732">Signal</keyword>
<proteinExistence type="evidence at transcript level"/>
<gene>
    <name evidence="4" type="primary">snet-1</name>
    <name evidence="4" type="ORF">C02F12.3</name>
</gene>
<dbReference type="EMBL" id="FO080254">
    <property type="protein sequence ID" value="CCD62374.1"/>
    <property type="molecule type" value="Genomic_DNA"/>
</dbReference>
<dbReference type="RefSeq" id="NP_001370352.1">
    <property type="nucleotide sequence ID" value="NM_001383546.1"/>
</dbReference>
<dbReference type="RefSeq" id="NP_508631.2">
    <property type="nucleotide sequence ID" value="NM_076230.6"/>
</dbReference>
<dbReference type="BioGRID" id="46986">
    <property type="interactions" value="1"/>
</dbReference>
<dbReference type="FunCoup" id="Q11099">
    <property type="interactions" value="387"/>
</dbReference>
<dbReference type="STRING" id="6239.C02F12.3.1"/>
<dbReference type="PaxDb" id="6239-C02F12.3.1"/>
<dbReference type="PeptideAtlas" id="Q11099"/>
<dbReference type="EnsemblMetazoa" id="C02F12.3.1">
    <property type="protein sequence ID" value="C02F12.3.1"/>
    <property type="gene ID" value="WBGene00015354"/>
</dbReference>
<dbReference type="EnsemblMetazoa" id="C02F12.3.2">
    <property type="protein sequence ID" value="C02F12.3.2"/>
    <property type="gene ID" value="WBGene00015354"/>
</dbReference>
<dbReference type="GeneID" id="182125"/>
<dbReference type="UCSC" id="C02F12.3.1">
    <property type="organism name" value="c. elegans"/>
</dbReference>
<dbReference type="AGR" id="WB:WBGene00015354"/>
<dbReference type="WormBase" id="C02F12.3">
    <property type="protein sequence ID" value="CE30849"/>
    <property type="gene ID" value="WBGene00015354"/>
    <property type="gene designation" value="snet-1"/>
</dbReference>
<dbReference type="eggNOG" id="ENOG502TI0I">
    <property type="taxonomic scope" value="Eukaryota"/>
</dbReference>
<dbReference type="HOGENOM" id="CLU_2294265_0_0_1"/>
<dbReference type="InParanoid" id="Q11099"/>
<dbReference type="OMA" id="RSGGHPM"/>
<dbReference type="OrthoDB" id="5807133at2759"/>
<dbReference type="PRO" id="PR:Q11099"/>
<dbReference type="Proteomes" id="UP000001940">
    <property type="component" value="Chromosome X"/>
</dbReference>
<dbReference type="Bgee" id="WBGene00015354">
    <property type="expression patterns" value="Expressed in larva and 3 other cell types or tissues"/>
</dbReference>
<dbReference type="GO" id="GO:0005576">
    <property type="term" value="C:extracellular region"/>
    <property type="evidence" value="ECO:0007669"/>
    <property type="project" value="UniProtKB-SubCell"/>
</dbReference>
<dbReference type="GO" id="GO:0043204">
    <property type="term" value="C:perikaryon"/>
    <property type="evidence" value="ECO:0007669"/>
    <property type="project" value="UniProtKB-SubCell"/>
</dbReference>
<dbReference type="GO" id="GO:0006935">
    <property type="term" value="P:chemotaxis"/>
    <property type="evidence" value="ECO:0007669"/>
    <property type="project" value="UniProtKB-KW"/>
</dbReference>
<dbReference type="GO" id="GO:0050920">
    <property type="term" value="P:regulation of chemotaxis"/>
    <property type="evidence" value="ECO:0000315"/>
    <property type="project" value="UniProtKB"/>
</dbReference>
<dbReference type="GO" id="GO:0090328">
    <property type="term" value="P:regulation of olfactory learning"/>
    <property type="evidence" value="ECO:0000315"/>
    <property type="project" value="UniProtKB"/>
</dbReference>
<dbReference type="GO" id="GO:0019236">
    <property type="term" value="P:response to pheromone"/>
    <property type="evidence" value="ECO:0000315"/>
    <property type="project" value="UniProtKB"/>
</dbReference>
<organism>
    <name type="scientific">Caenorhabditis elegans</name>
    <dbReference type="NCBI Taxonomy" id="6239"/>
    <lineage>
        <taxon>Eukaryota</taxon>
        <taxon>Metazoa</taxon>
        <taxon>Ecdysozoa</taxon>
        <taxon>Nematoda</taxon>
        <taxon>Chromadorea</taxon>
        <taxon>Rhabditida</taxon>
        <taxon>Rhabditina</taxon>
        <taxon>Rhabditomorpha</taxon>
        <taxon>Rhabditoidea</taxon>
        <taxon>Rhabditidae</taxon>
        <taxon>Peloderinae</taxon>
        <taxon>Caenorhabditis</taxon>
    </lineage>
</organism>